<evidence type="ECO:0000250" key="1"/>
<evidence type="ECO:0000255" key="2">
    <source>
        <dbReference type="PROSITE-ProRule" id="PRU00808"/>
    </source>
</evidence>
<evidence type="ECO:0000269" key="3">
    <source>
    </source>
</evidence>
<gene>
    <name type="primary">Prosalpha2</name>
    <name type="synonym">PROS-25</name>
    <name type="synonym">Pros25</name>
    <name type="ORF">CG5266</name>
</gene>
<feature type="chain" id="PRO_0000124083" description="Proteasome subunit alpha type-2">
    <location>
        <begin position="1"/>
        <end position="234"/>
    </location>
</feature>
<keyword id="KW-0963">Cytoplasm</keyword>
<keyword id="KW-0539">Nucleus</keyword>
<keyword id="KW-0647">Proteasome</keyword>
<keyword id="KW-1185">Reference proteome</keyword>
<name>PSA2_DROME</name>
<proteinExistence type="evidence at protein level"/>
<organism>
    <name type="scientific">Drosophila melanogaster</name>
    <name type="common">Fruit fly</name>
    <dbReference type="NCBI Taxonomy" id="7227"/>
    <lineage>
        <taxon>Eukaryota</taxon>
        <taxon>Metazoa</taxon>
        <taxon>Ecdysozoa</taxon>
        <taxon>Arthropoda</taxon>
        <taxon>Hexapoda</taxon>
        <taxon>Insecta</taxon>
        <taxon>Pterygota</taxon>
        <taxon>Neoptera</taxon>
        <taxon>Endopterygota</taxon>
        <taxon>Diptera</taxon>
        <taxon>Brachycera</taxon>
        <taxon>Muscomorpha</taxon>
        <taxon>Ephydroidea</taxon>
        <taxon>Drosophilidae</taxon>
        <taxon>Drosophila</taxon>
        <taxon>Sophophora</taxon>
    </lineage>
</organism>
<protein>
    <recommendedName>
        <fullName>Proteasome subunit alpha type-2</fullName>
    </recommendedName>
    <alternativeName>
        <fullName>PROS-Dm25</fullName>
    </alternativeName>
    <alternativeName>
        <fullName>Proteasome 25 kDa subunit</fullName>
    </alternativeName>
</protein>
<comment type="function">
    <text>The proteasome is a multicatalytic proteinase complex which is characterized by its ability to cleave peptides with Arg, Phe, Tyr, Leu, and Glu adjacent to the leaving group at neutral or slightly basic pH. The proteasome has an ATP-dependent proteolytic activity.</text>
</comment>
<comment type="subunit">
    <text evidence="1 3">The 26S proteasome consists of a 20S proteasome core and two 19S regulatory subunits. The 20S proteasome core is composed of 28 subunits that are arranged in four stacked rings, resulting in a barrel-shaped structure. The two end rings are each formed by seven alpha subunits, and the two central rings are each formed by seven beta subunits. The catalytic chamber with the active sites is on the inside of the barrel (By similarity). Interacts with Rpn6.</text>
</comment>
<comment type="interaction">
    <interactant intactId="EBI-98978">
        <id>P40301</id>
    </interactant>
    <interactant intactId="EBI-3416638">
        <id>Q9XZJ4</id>
        <label>Prosalpha1</label>
    </interactant>
    <organismsDiffer>false</organismsDiffer>
    <experiments>3</experiments>
</comment>
<comment type="interaction">
    <interactant intactId="EBI-98978">
        <id>P40301</id>
    </interactant>
    <interactant intactId="EBI-138951">
        <id>P18053</id>
        <label>Prosalpha3</label>
    </interactant>
    <organismsDiffer>false</organismsDiffer>
    <experiments>4</experiments>
</comment>
<comment type="interaction">
    <interactant intactId="EBI-98978">
        <id>P40301</id>
    </interactant>
    <interactant intactId="EBI-90888">
        <id>Q9VJJ0</id>
        <label>Prosbeta4</label>
    </interactant>
    <organismsDiffer>false</organismsDiffer>
    <experiments>4</experiments>
</comment>
<comment type="interaction">
    <interactant intactId="EBI-98978">
        <id>P40301</id>
    </interactant>
    <interactant intactId="EBI-98473">
        <id>Q9VNA5</id>
        <label>Prosbeta7</label>
    </interactant>
    <organismsDiffer>false</organismsDiffer>
    <experiments>3</experiments>
</comment>
<comment type="interaction">
    <interactant intactId="EBI-98978">
        <id>P40301</id>
    </interactant>
    <interactant intactId="EBI-174806">
        <id>O18413</id>
        <label>Rpt6</label>
    </interactant>
    <organismsDiffer>false</organismsDiffer>
    <experiments>3</experiments>
</comment>
<comment type="subcellular location">
    <subcellularLocation>
        <location evidence="1">Cytoplasm</location>
    </subcellularLocation>
    <subcellularLocation>
        <location evidence="1">Nucleus</location>
    </subcellularLocation>
</comment>
<comment type="similarity">
    <text evidence="2">Belongs to the peptidase T1A family.</text>
</comment>
<dbReference type="EMBL" id="X70304">
    <property type="protein sequence ID" value="CAA49783.1"/>
    <property type="molecule type" value="Genomic_DNA"/>
</dbReference>
<dbReference type="EMBL" id="AE014297">
    <property type="protein sequence ID" value="AAF54814.1"/>
    <property type="molecule type" value="Genomic_DNA"/>
</dbReference>
<dbReference type="EMBL" id="AY069280">
    <property type="protein sequence ID" value="AAL39425.1"/>
    <property type="molecule type" value="mRNA"/>
</dbReference>
<dbReference type="PIR" id="S36116">
    <property type="entry name" value="S36116"/>
</dbReference>
<dbReference type="RefSeq" id="NP_524328.1">
    <property type="nucleotide sequence ID" value="NM_079604.3"/>
</dbReference>
<dbReference type="SMR" id="P40301"/>
<dbReference type="BioGRID" id="66629">
    <property type="interactions" value="47"/>
</dbReference>
<dbReference type="ComplexPortal" id="CPX-9070">
    <property type="entry name" value="26S proteasome complex"/>
</dbReference>
<dbReference type="ComplexPortal" id="CPX-9087">
    <property type="entry name" value="26S proteasome complex, testis-specific variant"/>
</dbReference>
<dbReference type="DIP" id="DIP-20541N"/>
<dbReference type="FunCoup" id="P40301">
    <property type="interactions" value="1432"/>
</dbReference>
<dbReference type="IntAct" id="P40301">
    <property type="interactions" value="109"/>
</dbReference>
<dbReference type="STRING" id="7227.FBpp0082062"/>
<dbReference type="PaxDb" id="7227-FBpp0082062"/>
<dbReference type="DNASU" id="41531"/>
<dbReference type="EnsemblMetazoa" id="FBtr0082590">
    <property type="protein sequence ID" value="FBpp0082062"/>
    <property type="gene ID" value="FBgn0086134"/>
</dbReference>
<dbReference type="GeneID" id="41531"/>
<dbReference type="KEGG" id="dme:Dmel_CG5266"/>
<dbReference type="AGR" id="FB:FBgn0086134"/>
<dbReference type="CTD" id="41531"/>
<dbReference type="FlyBase" id="FBgn0086134">
    <property type="gene designation" value="Prosalpha2"/>
</dbReference>
<dbReference type="VEuPathDB" id="VectorBase:FBgn0086134"/>
<dbReference type="eggNOG" id="KOG0181">
    <property type="taxonomic scope" value="Eukaryota"/>
</dbReference>
<dbReference type="GeneTree" id="ENSGT00550000074870"/>
<dbReference type="HOGENOM" id="CLU_035750_4_1_1"/>
<dbReference type="InParanoid" id="P40301"/>
<dbReference type="OMA" id="ATCIGKD"/>
<dbReference type="OrthoDB" id="431557at2759"/>
<dbReference type="PhylomeDB" id="P40301"/>
<dbReference type="Reactome" id="R-DME-1169091">
    <property type="pathway name" value="Activation of NF-kappaB in B cells"/>
</dbReference>
<dbReference type="Reactome" id="R-DME-1234176">
    <property type="pathway name" value="Oxygen-dependent proline hydroxylation of Hypoxia-inducible Factor Alpha"/>
</dbReference>
<dbReference type="Reactome" id="R-DME-1236978">
    <property type="pathway name" value="Cross-presentation of soluble exogenous antigens (endosomes)"/>
</dbReference>
<dbReference type="Reactome" id="R-DME-174084">
    <property type="pathway name" value="Autodegradation of Cdh1 by Cdh1:APC/C"/>
</dbReference>
<dbReference type="Reactome" id="R-DME-174154">
    <property type="pathway name" value="APC/C:Cdc20 mediated degradation of Securin"/>
</dbReference>
<dbReference type="Reactome" id="R-DME-174178">
    <property type="pathway name" value="APC/C:Cdh1 mediated degradation of Cdc20 and other APC/C:Cdh1 targeted proteins in late mitosis/early G1"/>
</dbReference>
<dbReference type="Reactome" id="R-DME-174184">
    <property type="pathway name" value="Cdc20:Phospho-APC/C mediated degradation of Cyclin A"/>
</dbReference>
<dbReference type="Reactome" id="R-DME-187577">
    <property type="pathway name" value="SCF(Skp2)-mediated degradation of p27/p21"/>
</dbReference>
<dbReference type="Reactome" id="R-DME-195253">
    <property type="pathway name" value="Degradation of beta-catenin by the destruction complex"/>
</dbReference>
<dbReference type="Reactome" id="R-DME-202424">
    <property type="pathway name" value="Downstream TCR signaling"/>
</dbReference>
<dbReference type="Reactome" id="R-DME-209360">
    <property type="pathway name" value="Ubiquitination and proteolysis of phosphorylated CI"/>
</dbReference>
<dbReference type="Reactome" id="R-DME-209406">
    <property type="pathway name" value="Degradation of NF-kappa-B inhibitor, CACT"/>
</dbReference>
<dbReference type="Reactome" id="R-DME-209461">
    <property type="pathway name" value="Ubiquitination and degradation of phosphorylated ARM"/>
</dbReference>
<dbReference type="Reactome" id="R-DME-216167">
    <property type="pathway name" value="Nuclear CI is degraded"/>
</dbReference>
<dbReference type="Reactome" id="R-DME-2467813">
    <property type="pathway name" value="Separation of Sister Chromatids"/>
</dbReference>
<dbReference type="Reactome" id="R-DME-2871837">
    <property type="pathway name" value="FCERI mediated NF-kB activation"/>
</dbReference>
<dbReference type="Reactome" id="R-DME-350562">
    <property type="pathway name" value="Regulation of ornithine decarboxylase (ODC)"/>
</dbReference>
<dbReference type="Reactome" id="R-DME-382556">
    <property type="pathway name" value="ABC-family proteins mediated transport"/>
</dbReference>
<dbReference type="Reactome" id="R-DME-432395">
    <property type="pathway name" value="Degradation of TIM"/>
</dbReference>
<dbReference type="Reactome" id="R-DME-432524">
    <property type="pathway name" value="Degradation of PER"/>
</dbReference>
<dbReference type="Reactome" id="R-DME-432626">
    <property type="pathway name" value="Circadian Clock pathway"/>
</dbReference>
<dbReference type="Reactome" id="R-DME-450408">
    <property type="pathway name" value="AUF1 (hnRNP D0) binds and destabilizes mRNA"/>
</dbReference>
<dbReference type="Reactome" id="R-DME-4608870">
    <property type="pathway name" value="Asymmetric localization of PCP proteins"/>
</dbReference>
<dbReference type="Reactome" id="R-DME-4641257">
    <property type="pathway name" value="Degradation of AXIN"/>
</dbReference>
<dbReference type="Reactome" id="R-DME-4641258">
    <property type="pathway name" value="Degradation of DVL"/>
</dbReference>
<dbReference type="Reactome" id="R-DME-5358346">
    <property type="pathway name" value="Hedgehog ligand biogenesis"/>
</dbReference>
<dbReference type="Reactome" id="R-DME-538864">
    <property type="pathway name" value="Degradation of CRY"/>
</dbReference>
<dbReference type="Reactome" id="R-DME-5607761">
    <property type="pathway name" value="Dectin-1 mediated noncanonical NF-kB signaling"/>
</dbReference>
<dbReference type="Reactome" id="R-DME-5607764">
    <property type="pathway name" value="CLEC7A (Dectin-1) signaling"/>
</dbReference>
<dbReference type="Reactome" id="R-DME-5610780">
    <property type="pathway name" value="Degradation of GLI1 by the proteasome"/>
</dbReference>
<dbReference type="Reactome" id="R-DME-5610785">
    <property type="pathway name" value="GLI3 is processed to GLI3R by the proteasome"/>
</dbReference>
<dbReference type="Reactome" id="R-DME-5632684">
    <property type="pathway name" value="Hedgehog 'on' state"/>
</dbReference>
<dbReference type="Reactome" id="R-DME-5658442">
    <property type="pathway name" value="Regulation of RAS by GAPs"/>
</dbReference>
<dbReference type="Reactome" id="R-DME-5676590">
    <property type="pathway name" value="NIK--&gt;noncanonical NF-kB signaling"/>
</dbReference>
<dbReference type="Reactome" id="R-DME-5689603">
    <property type="pathway name" value="UCH proteinases"/>
</dbReference>
<dbReference type="Reactome" id="R-DME-5689880">
    <property type="pathway name" value="Ub-specific processing proteases"/>
</dbReference>
<dbReference type="Reactome" id="R-DME-6798695">
    <property type="pathway name" value="Neutrophil degranulation"/>
</dbReference>
<dbReference type="Reactome" id="R-DME-68949">
    <property type="pathway name" value="Orc1 removal from chromatin"/>
</dbReference>
<dbReference type="Reactome" id="R-DME-69017">
    <property type="pathway name" value="CDK-mediated phosphorylation and removal of Cdc6"/>
</dbReference>
<dbReference type="Reactome" id="R-DME-69601">
    <property type="pathway name" value="Ubiquitin Mediated Degradation of Phosphorylated Cdc25A"/>
</dbReference>
<dbReference type="Reactome" id="R-DME-75815">
    <property type="pathway name" value="Ubiquitin-dependent degradation of Cyclin D"/>
</dbReference>
<dbReference type="Reactome" id="R-DME-8854050">
    <property type="pathway name" value="FBXL7 down-regulates AURKA during mitotic entry and in early mitosis"/>
</dbReference>
<dbReference type="Reactome" id="R-DME-8939236">
    <property type="pathway name" value="RUNX1 regulates transcription of genes involved in differentiation of HSCs"/>
</dbReference>
<dbReference type="Reactome" id="R-DME-8939902">
    <property type="pathway name" value="Regulation of RUNX2 expression and activity"/>
</dbReference>
<dbReference type="Reactome" id="R-DME-8941858">
    <property type="pathway name" value="Regulation of RUNX3 expression and activity"/>
</dbReference>
<dbReference type="Reactome" id="R-DME-8948751">
    <property type="pathway name" value="Regulation of PTEN stability and activity"/>
</dbReference>
<dbReference type="Reactome" id="R-DME-8951664">
    <property type="pathway name" value="Neddylation"/>
</dbReference>
<dbReference type="Reactome" id="R-DME-9020702">
    <property type="pathway name" value="Interleukin-1 signaling"/>
</dbReference>
<dbReference type="Reactome" id="R-DME-9755511">
    <property type="pathway name" value="KEAP1-NFE2L2 pathway"/>
</dbReference>
<dbReference type="Reactome" id="R-DME-9762114">
    <property type="pathway name" value="GSK3B and BTRC:CUL1-mediated-degradation of NFE2L2"/>
</dbReference>
<dbReference type="Reactome" id="R-DME-983168">
    <property type="pathway name" value="Antigen processing: Ubiquitination &amp; Proteasome degradation"/>
</dbReference>
<dbReference type="Reactome" id="R-DME-9907900">
    <property type="pathway name" value="Proteasome assembly"/>
</dbReference>
<dbReference type="BioGRID-ORCS" id="41531">
    <property type="hits" value="1 hit in 1 CRISPR screen"/>
</dbReference>
<dbReference type="GenomeRNAi" id="41531"/>
<dbReference type="PRO" id="PR:P40301"/>
<dbReference type="Proteomes" id="UP000000803">
    <property type="component" value="Chromosome 3R"/>
</dbReference>
<dbReference type="Bgee" id="FBgn0086134">
    <property type="expression patterns" value="Expressed in egg cell and 200 other cell types or tissues"/>
</dbReference>
<dbReference type="GO" id="GO:0005829">
    <property type="term" value="C:cytosol"/>
    <property type="evidence" value="ECO:0000304"/>
    <property type="project" value="Reactome"/>
</dbReference>
<dbReference type="GO" id="GO:0005654">
    <property type="term" value="C:nucleoplasm"/>
    <property type="evidence" value="ECO:0000304"/>
    <property type="project" value="Reactome"/>
</dbReference>
<dbReference type="GO" id="GO:0000502">
    <property type="term" value="C:proteasome complex"/>
    <property type="evidence" value="ECO:0000314"/>
    <property type="project" value="FlyBase"/>
</dbReference>
<dbReference type="GO" id="GO:0005839">
    <property type="term" value="C:proteasome core complex"/>
    <property type="evidence" value="ECO:0000314"/>
    <property type="project" value="FlyBase"/>
</dbReference>
<dbReference type="GO" id="GO:0019773">
    <property type="term" value="C:proteasome core complex, alpha-subunit complex"/>
    <property type="evidence" value="ECO:0000250"/>
    <property type="project" value="UniProtKB"/>
</dbReference>
<dbReference type="GO" id="GO:0043161">
    <property type="term" value="P:proteasome-mediated ubiquitin-dependent protein catabolic process"/>
    <property type="evidence" value="ECO:0000315"/>
    <property type="project" value="FlyBase"/>
</dbReference>
<dbReference type="CDD" id="cd03750">
    <property type="entry name" value="proteasome_alpha_type_2"/>
    <property type="match status" value="1"/>
</dbReference>
<dbReference type="FunFam" id="3.60.20.10:FF:000012">
    <property type="entry name" value="Proteasome subunit alpha type"/>
    <property type="match status" value="1"/>
</dbReference>
<dbReference type="Gene3D" id="3.60.20.10">
    <property type="entry name" value="Glutamine Phosphoribosylpyrophosphate, subunit 1, domain 1"/>
    <property type="match status" value="1"/>
</dbReference>
<dbReference type="InterPro" id="IPR029055">
    <property type="entry name" value="Ntn_hydrolases_N"/>
</dbReference>
<dbReference type="InterPro" id="IPR050115">
    <property type="entry name" value="Proteasome_alpha"/>
</dbReference>
<dbReference type="InterPro" id="IPR023332">
    <property type="entry name" value="Proteasome_alpha-type"/>
</dbReference>
<dbReference type="InterPro" id="IPR000426">
    <property type="entry name" value="Proteasome_asu_N"/>
</dbReference>
<dbReference type="InterPro" id="IPR001353">
    <property type="entry name" value="Proteasome_sua/b"/>
</dbReference>
<dbReference type="NCBIfam" id="NF003075">
    <property type="entry name" value="PRK03996.1"/>
    <property type="match status" value="1"/>
</dbReference>
<dbReference type="PANTHER" id="PTHR11599">
    <property type="entry name" value="PROTEASOME SUBUNIT ALPHA/BETA"/>
    <property type="match status" value="1"/>
</dbReference>
<dbReference type="Pfam" id="PF00227">
    <property type="entry name" value="Proteasome"/>
    <property type="match status" value="1"/>
</dbReference>
<dbReference type="Pfam" id="PF10584">
    <property type="entry name" value="Proteasome_A_N"/>
    <property type="match status" value="1"/>
</dbReference>
<dbReference type="SMART" id="SM00948">
    <property type="entry name" value="Proteasome_A_N"/>
    <property type="match status" value="1"/>
</dbReference>
<dbReference type="SUPFAM" id="SSF56235">
    <property type="entry name" value="N-terminal nucleophile aminohydrolases (Ntn hydrolases)"/>
    <property type="match status" value="1"/>
</dbReference>
<dbReference type="PROSITE" id="PS00388">
    <property type="entry name" value="PROTEASOME_ALPHA_1"/>
    <property type="match status" value="1"/>
</dbReference>
<dbReference type="PROSITE" id="PS51475">
    <property type="entry name" value="PROTEASOME_ALPHA_2"/>
    <property type="match status" value="1"/>
</dbReference>
<accession>P40301</accession>
<accession>Q9VG71</accession>
<reference key="1">
    <citation type="journal article" date="1993" name="Biochim. Biophys. Acta">
        <title>Sequence and genomic organization of the Drosophila proteasome PROS-Dm25 gene.</title>
        <authorList>
            <person name="Seelig A."/>
            <person name="Troxell M."/>
            <person name="Kloetzel P.-M."/>
        </authorList>
    </citation>
    <scope>NUCLEOTIDE SEQUENCE [GENOMIC DNA]</scope>
    <source>
        <strain>Canton-S</strain>
    </source>
</reference>
<reference key="2">
    <citation type="journal article" date="2000" name="Science">
        <title>The genome sequence of Drosophila melanogaster.</title>
        <authorList>
            <person name="Adams M.D."/>
            <person name="Celniker S.E."/>
            <person name="Holt R.A."/>
            <person name="Evans C.A."/>
            <person name="Gocayne J.D."/>
            <person name="Amanatides P.G."/>
            <person name="Scherer S.E."/>
            <person name="Li P.W."/>
            <person name="Hoskins R.A."/>
            <person name="Galle R.F."/>
            <person name="George R.A."/>
            <person name="Lewis S.E."/>
            <person name="Richards S."/>
            <person name="Ashburner M."/>
            <person name="Henderson S.N."/>
            <person name="Sutton G.G."/>
            <person name="Wortman J.R."/>
            <person name="Yandell M.D."/>
            <person name="Zhang Q."/>
            <person name="Chen L.X."/>
            <person name="Brandon R.C."/>
            <person name="Rogers Y.-H.C."/>
            <person name="Blazej R.G."/>
            <person name="Champe M."/>
            <person name="Pfeiffer B.D."/>
            <person name="Wan K.H."/>
            <person name="Doyle C."/>
            <person name="Baxter E.G."/>
            <person name="Helt G."/>
            <person name="Nelson C.R."/>
            <person name="Miklos G.L.G."/>
            <person name="Abril J.F."/>
            <person name="Agbayani A."/>
            <person name="An H.-J."/>
            <person name="Andrews-Pfannkoch C."/>
            <person name="Baldwin D."/>
            <person name="Ballew R.M."/>
            <person name="Basu A."/>
            <person name="Baxendale J."/>
            <person name="Bayraktaroglu L."/>
            <person name="Beasley E.M."/>
            <person name="Beeson K.Y."/>
            <person name="Benos P.V."/>
            <person name="Berman B.P."/>
            <person name="Bhandari D."/>
            <person name="Bolshakov S."/>
            <person name="Borkova D."/>
            <person name="Botchan M.R."/>
            <person name="Bouck J."/>
            <person name="Brokstein P."/>
            <person name="Brottier P."/>
            <person name="Burtis K.C."/>
            <person name="Busam D.A."/>
            <person name="Butler H."/>
            <person name="Cadieu E."/>
            <person name="Center A."/>
            <person name="Chandra I."/>
            <person name="Cherry J.M."/>
            <person name="Cawley S."/>
            <person name="Dahlke C."/>
            <person name="Davenport L.B."/>
            <person name="Davies P."/>
            <person name="de Pablos B."/>
            <person name="Delcher A."/>
            <person name="Deng Z."/>
            <person name="Mays A.D."/>
            <person name="Dew I."/>
            <person name="Dietz S.M."/>
            <person name="Dodson K."/>
            <person name="Doup L.E."/>
            <person name="Downes M."/>
            <person name="Dugan-Rocha S."/>
            <person name="Dunkov B.C."/>
            <person name="Dunn P."/>
            <person name="Durbin K.J."/>
            <person name="Evangelista C.C."/>
            <person name="Ferraz C."/>
            <person name="Ferriera S."/>
            <person name="Fleischmann W."/>
            <person name="Fosler C."/>
            <person name="Gabrielian A.E."/>
            <person name="Garg N.S."/>
            <person name="Gelbart W.M."/>
            <person name="Glasser K."/>
            <person name="Glodek A."/>
            <person name="Gong F."/>
            <person name="Gorrell J.H."/>
            <person name="Gu Z."/>
            <person name="Guan P."/>
            <person name="Harris M."/>
            <person name="Harris N.L."/>
            <person name="Harvey D.A."/>
            <person name="Heiman T.J."/>
            <person name="Hernandez J.R."/>
            <person name="Houck J."/>
            <person name="Hostin D."/>
            <person name="Houston K.A."/>
            <person name="Howland T.J."/>
            <person name="Wei M.-H."/>
            <person name="Ibegwam C."/>
            <person name="Jalali M."/>
            <person name="Kalush F."/>
            <person name="Karpen G.H."/>
            <person name="Ke Z."/>
            <person name="Kennison J.A."/>
            <person name="Ketchum K.A."/>
            <person name="Kimmel B.E."/>
            <person name="Kodira C.D."/>
            <person name="Kraft C.L."/>
            <person name="Kravitz S."/>
            <person name="Kulp D."/>
            <person name="Lai Z."/>
            <person name="Lasko P."/>
            <person name="Lei Y."/>
            <person name="Levitsky A.A."/>
            <person name="Li J.H."/>
            <person name="Li Z."/>
            <person name="Liang Y."/>
            <person name="Lin X."/>
            <person name="Liu X."/>
            <person name="Mattei B."/>
            <person name="McIntosh T.C."/>
            <person name="McLeod M.P."/>
            <person name="McPherson D."/>
            <person name="Merkulov G."/>
            <person name="Milshina N.V."/>
            <person name="Mobarry C."/>
            <person name="Morris J."/>
            <person name="Moshrefi A."/>
            <person name="Mount S.M."/>
            <person name="Moy M."/>
            <person name="Murphy B."/>
            <person name="Murphy L."/>
            <person name="Muzny D.M."/>
            <person name="Nelson D.L."/>
            <person name="Nelson D.R."/>
            <person name="Nelson K.A."/>
            <person name="Nixon K."/>
            <person name="Nusskern D.R."/>
            <person name="Pacleb J.M."/>
            <person name="Palazzolo M."/>
            <person name="Pittman G.S."/>
            <person name="Pan S."/>
            <person name="Pollard J."/>
            <person name="Puri V."/>
            <person name="Reese M.G."/>
            <person name="Reinert K."/>
            <person name="Remington K."/>
            <person name="Saunders R.D.C."/>
            <person name="Scheeler F."/>
            <person name="Shen H."/>
            <person name="Shue B.C."/>
            <person name="Siden-Kiamos I."/>
            <person name="Simpson M."/>
            <person name="Skupski M.P."/>
            <person name="Smith T.J."/>
            <person name="Spier E."/>
            <person name="Spradling A.C."/>
            <person name="Stapleton M."/>
            <person name="Strong R."/>
            <person name="Sun E."/>
            <person name="Svirskas R."/>
            <person name="Tector C."/>
            <person name="Turner R."/>
            <person name="Venter E."/>
            <person name="Wang A.H."/>
            <person name="Wang X."/>
            <person name="Wang Z.-Y."/>
            <person name="Wassarman D.A."/>
            <person name="Weinstock G.M."/>
            <person name="Weissenbach J."/>
            <person name="Williams S.M."/>
            <person name="Woodage T."/>
            <person name="Worley K.C."/>
            <person name="Wu D."/>
            <person name="Yang S."/>
            <person name="Yao Q.A."/>
            <person name="Ye J."/>
            <person name="Yeh R.-F."/>
            <person name="Zaveri J.S."/>
            <person name="Zhan M."/>
            <person name="Zhang G."/>
            <person name="Zhao Q."/>
            <person name="Zheng L."/>
            <person name="Zheng X.H."/>
            <person name="Zhong F.N."/>
            <person name="Zhong W."/>
            <person name="Zhou X."/>
            <person name="Zhu S.C."/>
            <person name="Zhu X."/>
            <person name="Smith H.O."/>
            <person name="Gibbs R.A."/>
            <person name="Myers E.W."/>
            <person name="Rubin G.M."/>
            <person name="Venter J.C."/>
        </authorList>
    </citation>
    <scope>NUCLEOTIDE SEQUENCE [LARGE SCALE GENOMIC DNA]</scope>
    <source>
        <strain>Berkeley</strain>
    </source>
</reference>
<reference key="3">
    <citation type="journal article" date="2002" name="Genome Biol.">
        <title>Annotation of the Drosophila melanogaster euchromatic genome: a systematic review.</title>
        <authorList>
            <person name="Misra S."/>
            <person name="Crosby M.A."/>
            <person name="Mungall C.J."/>
            <person name="Matthews B.B."/>
            <person name="Campbell K.S."/>
            <person name="Hradecky P."/>
            <person name="Huang Y."/>
            <person name="Kaminker J.S."/>
            <person name="Millburn G.H."/>
            <person name="Prochnik S.E."/>
            <person name="Smith C.D."/>
            <person name="Tupy J.L."/>
            <person name="Whitfield E.J."/>
            <person name="Bayraktaroglu L."/>
            <person name="Berman B.P."/>
            <person name="Bettencourt B.R."/>
            <person name="Celniker S.E."/>
            <person name="de Grey A.D.N.J."/>
            <person name="Drysdale R.A."/>
            <person name="Harris N.L."/>
            <person name="Richter J."/>
            <person name="Russo S."/>
            <person name="Schroeder A.J."/>
            <person name="Shu S.Q."/>
            <person name="Stapleton M."/>
            <person name="Yamada C."/>
            <person name="Ashburner M."/>
            <person name="Gelbart W.M."/>
            <person name="Rubin G.M."/>
            <person name="Lewis S.E."/>
        </authorList>
    </citation>
    <scope>GENOME REANNOTATION</scope>
    <source>
        <strain>Berkeley</strain>
    </source>
</reference>
<reference key="4">
    <citation type="journal article" date="2002" name="Genome Biol.">
        <title>A Drosophila full-length cDNA resource.</title>
        <authorList>
            <person name="Stapleton M."/>
            <person name="Carlson J.W."/>
            <person name="Brokstein P."/>
            <person name="Yu C."/>
            <person name="Champe M."/>
            <person name="George R.A."/>
            <person name="Guarin H."/>
            <person name="Kronmiller B."/>
            <person name="Pacleb J.M."/>
            <person name="Park S."/>
            <person name="Wan K.H."/>
            <person name="Rubin G.M."/>
            <person name="Celniker S.E."/>
        </authorList>
    </citation>
    <scope>NUCLEOTIDE SEQUENCE [LARGE SCALE MRNA]</scope>
    <source>
        <strain>Berkeley</strain>
        <tissue>Ovary</tissue>
    </source>
</reference>
<reference key="5">
    <citation type="journal article" date="2012" name="Proc. Natl. Acad. Sci. U.S.A.">
        <title>The proteasomal subunit Rpn6 is a molecular clamp holding the core and regulatory subcomplexes together.</title>
        <authorList>
            <person name="Pathare G.R."/>
            <person name="Nagy I."/>
            <person name="Bohn S."/>
            <person name="Unverdorben P."/>
            <person name="Hubert A."/>
            <person name="Korner R."/>
            <person name="Nickell S."/>
            <person name="Lasker K."/>
            <person name="Sali A."/>
            <person name="Tamura T."/>
            <person name="Nishioka T."/>
            <person name="Forster F."/>
            <person name="Baumeister W."/>
            <person name="Bracher A."/>
        </authorList>
    </citation>
    <scope>INTERACTION WITH RPN6</scope>
</reference>
<sequence length="234" mass="25907">MATERYSFSLTTFSPSGKLVQLEYALAAVSGGAPSVGIIASNGVVIATENKHKSPLYEQHSVHRVEMIYNHIGMVYSGMGPDYRLLVKQARKIAQTYYLTYKEPIPVSQLVQRVATLMQEYTQSGGVRPFGVSLLICGWDNDRPYLYQSDPSGAYFAWKATAMGKNAVNGKTFLEKRYSEDLELDDAVHTAILTLKEGFEGKMTADNIEIGICDQNGFQRLDPASIKDYLASIP</sequence>